<feature type="chain" id="PRO_1000074563" description="Phospho-N-acetylmuramoyl-pentapeptide-transferase">
    <location>
        <begin position="1"/>
        <end position="360"/>
    </location>
</feature>
<feature type="transmembrane region" description="Helical" evidence="1">
    <location>
        <begin position="21"/>
        <end position="41"/>
    </location>
</feature>
<feature type="transmembrane region" description="Helical" evidence="1">
    <location>
        <begin position="74"/>
        <end position="94"/>
    </location>
</feature>
<feature type="transmembrane region" description="Helical" evidence="1">
    <location>
        <begin position="97"/>
        <end position="117"/>
    </location>
</feature>
<feature type="transmembrane region" description="Helical" evidence="1">
    <location>
        <begin position="135"/>
        <end position="155"/>
    </location>
</feature>
<feature type="transmembrane region" description="Helical" evidence="1">
    <location>
        <begin position="168"/>
        <end position="188"/>
    </location>
</feature>
<feature type="transmembrane region" description="Helical" evidence="1">
    <location>
        <begin position="199"/>
        <end position="219"/>
    </location>
</feature>
<feature type="transmembrane region" description="Helical" evidence="1">
    <location>
        <begin position="236"/>
        <end position="256"/>
    </location>
</feature>
<feature type="transmembrane region" description="Helical" evidence="1">
    <location>
        <begin position="263"/>
        <end position="283"/>
    </location>
</feature>
<feature type="transmembrane region" description="Helical" evidence="1">
    <location>
        <begin position="288"/>
        <end position="308"/>
    </location>
</feature>
<feature type="transmembrane region" description="Helical" evidence="1">
    <location>
        <begin position="338"/>
        <end position="358"/>
    </location>
</feature>
<protein>
    <recommendedName>
        <fullName evidence="1">Phospho-N-acetylmuramoyl-pentapeptide-transferase</fullName>
        <ecNumber evidence="1">2.7.8.13</ecNumber>
    </recommendedName>
    <alternativeName>
        <fullName evidence="1">UDP-MurNAc-pentapeptide phosphotransferase</fullName>
    </alternativeName>
</protein>
<comment type="function">
    <text evidence="1">Catalyzes the initial step of the lipid cycle reactions in the biosynthesis of the cell wall peptidoglycan: transfers peptidoglycan precursor phospho-MurNAc-pentapeptide from UDP-MurNAc-pentapeptide onto the lipid carrier undecaprenyl phosphate, yielding undecaprenyl-pyrophosphoryl-MurNAc-pentapeptide, known as lipid I.</text>
</comment>
<comment type="catalytic activity">
    <reaction evidence="1">
        <text>UDP-N-acetyl-alpha-D-muramoyl-L-alanyl-gamma-D-glutamyl-meso-2,6-diaminopimeloyl-D-alanyl-D-alanine + di-trans,octa-cis-undecaprenyl phosphate = di-trans,octa-cis-undecaprenyl diphospho-N-acetyl-alpha-D-muramoyl-L-alanyl-D-glutamyl-meso-2,6-diaminopimeloyl-D-alanyl-D-alanine + UMP</text>
        <dbReference type="Rhea" id="RHEA:28386"/>
        <dbReference type="ChEBI" id="CHEBI:57865"/>
        <dbReference type="ChEBI" id="CHEBI:60392"/>
        <dbReference type="ChEBI" id="CHEBI:61386"/>
        <dbReference type="ChEBI" id="CHEBI:61387"/>
        <dbReference type="EC" id="2.7.8.13"/>
    </reaction>
</comment>
<comment type="cofactor">
    <cofactor evidence="1">
        <name>Mg(2+)</name>
        <dbReference type="ChEBI" id="CHEBI:18420"/>
    </cofactor>
</comment>
<comment type="pathway">
    <text evidence="1">Cell wall biogenesis; peptidoglycan biosynthesis.</text>
</comment>
<comment type="subcellular location">
    <subcellularLocation>
        <location evidence="1">Cell inner membrane</location>
        <topology evidence="1">Multi-pass membrane protein</topology>
    </subcellularLocation>
</comment>
<comment type="similarity">
    <text evidence="1">Belongs to the glycosyltransferase 4 family. MraY subfamily.</text>
</comment>
<organism>
    <name type="scientific">Shewanella sediminis (strain HAW-EB3)</name>
    <dbReference type="NCBI Taxonomy" id="425104"/>
    <lineage>
        <taxon>Bacteria</taxon>
        <taxon>Pseudomonadati</taxon>
        <taxon>Pseudomonadota</taxon>
        <taxon>Gammaproteobacteria</taxon>
        <taxon>Alteromonadales</taxon>
        <taxon>Shewanellaceae</taxon>
        <taxon>Shewanella</taxon>
    </lineage>
</organism>
<dbReference type="EC" id="2.7.8.13" evidence="1"/>
<dbReference type="EMBL" id="CP000821">
    <property type="protein sequence ID" value="ABV35020.1"/>
    <property type="molecule type" value="Genomic_DNA"/>
</dbReference>
<dbReference type="RefSeq" id="WP_012140757.1">
    <property type="nucleotide sequence ID" value="NC_009831.1"/>
</dbReference>
<dbReference type="SMR" id="A8FQ97"/>
<dbReference type="STRING" id="425104.Ssed_0407"/>
<dbReference type="KEGG" id="sse:Ssed_0407"/>
<dbReference type="eggNOG" id="COG0472">
    <property type="taxonomic scope" value="Bacteria"/>
</dbReference>
<dbReference type="HOGENOM" id="CLU_023982_0_0_6"/>
<dbReference type="OrthoDB" id="9805475at2"/>
<dbReference type="UniPathway" id="UPA00219"/>
<dbReference type="Proteomes" id="UP000002015">
    <property type="component" value="Chromosome"/>
</dbReference>
<dbReference type="GO" id="GO:0005886">
    <property type="term" value="C:plasma membrane"/>
    <property type="evidence" value="ECO:0007669"/>
    <property type="project" value="UniProtKB-SubCell"/>
</dbReference>
<dbReference type="GO" id="GO:0046872">
    <property type="term" value="F:metal ion binding"/>
    <property type="evidence" value="ECO:0007669"/>
    <property type="project" value="UniProtKB-KW"/>
</dbReference>
<dbReference type="GO" id="GO:0008963">
    <property type="term" value="F:phospho-N-acetylmuramoyl-pentapeptide-transferase activity"/>
    <property type="evidence" value="ECO:0007669"/>
    <property type="project" value="UniProtKB-UniRule"/>
</dbReference>
<dbReference type="GO" id="GO:0051992">
    <property type="term" value="F:UDP-N-acetylmuramoyl-L-alanyl-D-glutamyl-meso-2,6-diaminopimelyl-D-alanyl-D-alanine:undecaprenyl-phosphate transferase activity"/>
    <property type="evidence" value="ECO:0007669"/>
    <property type="project" value="RHEA"/>
</dbReference>
<dbReference type="GO" id="GO:0051301">
    <property type="term" value="P:cell division"/>
    <property type="evidence" value="ECO:0007669"/>
    <property type="project" value="UniProtKB-KW"/>
</dbReference>
<dbReference type="GO" id="GO:0071555">
    <property type="term" value="P:cell wall organization"/>
    <property type="evidence" value="ECO:0007669"/>
    <property type="project" value="UniProtKB-KW"/>
</dbReference>
<dbReference type="GO" id="GO:0009252">
    <property type="term" value="P:peptidoglycan biosynthetic process"/>
    <property type="evidence" value="ECO:0007669"/>
    <property type="project" value="UniProtKB-UniRule"/>
</dbReference>
<dbReference type="GO" id="GO:0008360">
    <property type="term" value="P:regulation of cell shape"/>
    <property type="evidence" value="ECO:0007669"/>
    <property type="project" value="UniProtKB-KW"/>
</dbReference>
<dbReference type="CDD" id="cd06852">
    <property type="entry name" value="GT_MraY"/>
    <property type="match status" value="1"/>
</dbReference>
<dbReference type="HAMAP" id="MF_00038">
    <property type="entry name" value="MraY"/>
    <property type="match status" value="1"/>
</dbReference>
<dbReference type="InterPro" id="IPR000715">
    <property type="entry name" value="Glycosyl_transferase_4"/>
</dbReference>
<dbReference type="InterPro" id="IPR003524">
    <property type="entry name" value="PNAcMuramoyl-5peptid_Trfase"/>
</dbReference>
<dbReference type="InterPro" id="IPR018480">
    <property type="entry name" value="PNAcMuramoyl-5peptid_Trfase_CS"/>
</dbReference>
<dbReference type="NCBIfam" id="TIGR00445">
    <property type="entry name" value="mraY"/>
    <property type="match status" value="1"/>
</dbReference>
<dbReference type="PANTHER" id="PTHR22926">
    <property type="entry name" value="PHOSPHO-N-ACETYLMURAMOYL-PENTAPEPTIDE-TRANSFERASE"/>
    <property type="match status" value="1"/>
</dbReference>
<dbReference type="PANTHER" id="PTHR22926:SF5">
    <property type="entry name" value="PHOSPHO-N-ACETYLMURAMOYL-PENTAPEPTIDE-TRANSFERASE HOMOLOG"/>
    <property type="match status" value="1"/>
</dbReference>
<dbReference type="Pfam" id="PF00953">
    <property type="entry name" value="Glycos_transf_4"/>
    <property type="match status" value="1"/>
</dbReference>
<dbReference type="Pfam" id="PF10555">
    <property type="entry name" value="MraY_sig1"/>
    <property type="match status" value="1"/>
</dbReference>
<dbReference type="PROSITE" id="PS01347">
    <property type="entry name" value="MRAY_1"/>
    <property type="match status" value="1"/>
</dbReference>
<dbReference type="PROSITE" id="PS01348">
    <property type="entry name" value="MRAY_2"/>
    <property type="match status" value="1"/>
</dbReference>
<gene>
    <name evidence="1" type="primary">mraY</name>
    <name type="ordered locus">Ssed_0407</name>
</gene>
<sequence length="360" mass="39805">MLVYLAEYLTQFYSGFNVFSYVTFRAILGLLTALIFSLWWGPKMIERLQMLQIGQVVRNDGPESHFSKRGTPTMGGILILAGVFISVLLWGDLASRYVWVVLFVLASFGLIGFIDDYRKVVRKDTKGLIAKWKYILQSLAALVIAFYLYASADLVGETQLVVPFFKDIMPQLGGFFIVLAYFTIVGSSNAVNLTDGLDGLAIMPTVMVAAAFALIAYLSGHVQFANYLHLPYLPGAGELVIVCTAIVGAGLGFLWFNTYPAQVFMGDVGSLALGAALGVIAVLVRQEILLVIMGGVFVMETVSVILQVGSYKLRGQRIFRMAPIHHHYELKGWPEPRVIVRFWIISLFLVLLGLATLKLR</sequence>
<reference key="1">
    <citation type="submission" date="2007-08" db="EMBL/GenBank/DDBJ databases">
        <title>Complete sequence of Shewanella sediminis HAW-EB3.</title>
        <authorList>
            <consortium name="US DOE Joint Genome Institute"/>
            <person name="Copeland A."/>
            <person name="Lucas S."/>
            <person name="Lapidus A."/>
            <person name="Barry K."/>
            <person name="Glavina del Rio T."/>
            <person name="Dalin E."/>
            <person name="Tice H."/>
            <person name="Pitluck S."/>
            <person name="Chertkov O."/>
            <person name="Brettin T."/>
            <person name="Bruce D."/>
            <person name="Detter J.C."/>
            <person name="Han C."/>
            <person name="Schmutz J."/>
            <person name="Larimer F."/>
            <person name="Land M."/>
            <person name="Hauser L."/>
            <person name="Kyrpides N."/>
            <person name="Kim E."/>
            <person name="Zhao J.-S."/>
            <person name="Richardson P."/>
        </authorList>
    </citation>
    <scope>NUCLEOTIDE SEQUENCE [LARGE SCALE GENOMIC DNA]</scope>
    <source>
        <strain>HAW-EB3</strain>
    </source>
</reference>
<name>MRAY_SHESH</name>
<accession>A8FQ97</accession>
<keyword id="KW-0131">Cell cycle</keyword>
<keyword id="KW-0132">Cell division</keyword>
<keyword id="KW-0997">Cell inner membrane</keyword>
<keyword id="KW-1003">Cell membrane</keyword>
<keyword id="KW-0133">Cell shape</keyword>
<keyword id="KW-0961">Cell wall biogenesis/degradation</keyword>
<keyword id="KW-0460">Magnesium</keyword>
<keyword id="KW-0472">Membrane</keyword>
<keyword id="KW-0479">Metal-binding</keyword>
<keyword id="KW-0573">Peptidoglycan synthesis</keyword>
<keyword id="KW-1185">Reference proteome</keyword>
<keyword id="KW-0808">Transferase</keyword>
<keyword id="KW-0812">Transmembrane</keyword>
<keyword id="KW-1133">Transmembrane helix</keyword>
<evidence type="ECO:0000255" key="1">
    <source>
        <dbReference type="HAMAP-Rule" id="MF_00038"/>
    </source>
</evidence>
<proteinExistence type="inferred from homology"/>